<feature type="chain" id="PRO_0000157025" description="Thiamine-phosphate synthase">
    <location>
        <begin position="1"/>
        <end position="223"/>
    </location>
</feature>
<feature type="binding site" evidence="1">
    <location>
        <begin position="42"/>
        <end position="46"/>
    </location>
    <ligand>
        <name>4-amino-2-methyl-5-(diphosphooxymethyl)pyrimidine</name>
        <dbReference type="ChEBI" id="CHEBI:57841"/>
    </ligand>
</feature>
<feature type="binding site" evidence="1">
    <location>
        <position position="83"/>
    </location>
    <ligand>
        <name>4-amino-2-methyl-5-(diphosphooxymethyl)pyrimidine</name>
        <dbReference type="ChEBI" id="CHEBI:57841"/>
    </ligand>
</feature>
<feature type="binding site" evidence="1">
    <location>
        <position position="84"/>
    </location>
    <ligand>
        <name>Mg(2+)</name>
        <dbReference type="ChEBI" id="CHEBI:18420"/>
    </ligand>
</feature>
<feature type="binding site" evidence="1">
    <location>
        <position position="103"/>
    </location>
    <ligand>
        <name>Mg(2+)</name>
        <dbReference type="ChEBI" id="CHEBI:18420"/>
    </ligand>
</feature>
<feature type="binding site" evidence="1">
    <location>
        <position position="122"/>
    </location>
    <ligand>
        <name>4-amino-2-methyl-5-(diphosphooxymethyl)pyrimidine</name>
        <dbReference type="ChEBI" id="CHEBI:57841"/>
    </ligand>
</feature>
<feature type="binding site" evidence="1">
    <location>
        <begin position="148"/>
        <end position="150"/>
    </location>
    <ligand>
        <name>2-[(2R,5Z)-2-carboxy-4-methylthiazol-5(2H)-ylidene]ethyl phosphate</name>
        <dbReference type="ChEBI" id="CHEBI:62899"/>
    </ligand>
</feature>
<feature type="binding site" evidence="1">
    <location>
        <position position="151"/>
    </location>
    <ligand>
        <name>4-amino-2-methyl-5-(diphosphooxymethyl)pyrimidine</name>
        <dbReference type="ChEBI" id="CHEBI:57841"/>
    </ligand>
</feature>
<feature type="binding site" evidence="1">
    <location>
        <position position="179"/>
    </location>
    <ligand>
        <name>2-[(2R,5Z)-2-carboxy-4-methylthiazol-5(2H)-ylidene]ethyl phosphate</name>
        <dbReference type="ChEBI" id="CHEBI:62899"/>
    </ligand>
</feature>
<sequence>MHQRLATLAAARLYLCTDARRERGDLAEFADAALAGGVDVIQLRDKGSPGEQRFGPLEARDELAACEILADAARRHGALFAVNDRADIARAAGADVLHLGQGDLPLEVARAFVGPDVLLGLSSHDRDQMAAAAAGPADYFCVGPCWPTPTKPGRAAPGLALVRAAAELHTGKPWFAIGGIDAQRLPEVLDAGARRVVVVRAITAADDPAAAARRLSSALAAAR</sequence>
<proteinExistence type="inferred from homology"/>
<gene>
    <name evidence="1" type="primary">thiE</name>
    <name type="ordered locus">MAP_3897c</name>
</gene>
<reference key="1">
    <citation type="journal article" date="2005" name="Proc. Natl. Acad. Sci. U.S.A.">
        <title>The complete genome sequence of Mycobacterium avium subspecies paratuberculosis.</title>
        <authorList>
            <person name="Li L."/>
            <person name="Bannantine J.P."/>
            <person name="Zhang Q."/>
            <person name="Amonsin A."/>
            <person name="May B.J."/>
            <person name="Alt D."/>
            <person name="Banerji N."/>
            <person name="Kanjilal S."/>
            <person name="Kapur V."/>
        </authorList>
    </citation>
    <scope>NUCLEOTIDE SEQUENCE [LARGE SCALE GENOMIC DNA]</scope>
    <source>
        <strain>ATCC BAA-968 / K-10</strain>
    </source>
</reference>
<organism>
    <name type="scientific">Mycolicibacterium paratuberculosis (strain ATCC BAA-968 / K-10)</name>
    <name type="common">Mycobacterium paratuberculosis</name>
    <dbReference type="NCBI Taxonomy" id="262316"/>
    <lineage>
        <taxon>Bacteria</taxon>
        <taxon>Bacillati</taxon>
        <taxon>Actinomycetota</taxon>
        <taxon>Actinomycetes</taxon>
        <taxon>Mycobacteriales</taxon>
        <taxon>Mycobacteriaceae</taxon>
        <taxon>Mycobacterium</taxon>
        <taxon>Mycobacterium avium complex (MAC)</taxon>
    </lineage>
</organism>
<accession>P61412</accession>
<keyword id="KW-0460">Magnesium</keyword>
<keyword id="KW-0479">Metal-binding</keyword>
<keyword id="KW-1185">Reference proteome</keyword>
<keyword id="KW-0784">Thiamine biosynthesis</keyword>
<keyword id="KW-0808">Transferase</keyword>
<dbReference type="EC" id="2.5.1.3" evidence="1"/>
<dbReference type="EMBL" id="AE016958">
    <property type="protein sequence ID" value="AAS06447.1"/>
    <property type="molecule type" value="Genomic_DNA"/>
</dbReference>
<dbReference type="RefSeq" id="WP_003879273.1">
    <property type="nucleotide sequence ID" value="NZ_CP106873.1"/>
</dbReference>
<dbReference type="SMR" id="P61412"/>
<dbReference type="STRING" id="262316.MAP_3897c"/>
<dbReference type="KEGG" id="mpa:MAP_3897c"/>
<dbReference type="eggNOG" id="COG0352">
    <property type="taxonomic scope" value="Bacteria"/>
</dbReference>
<dbReference type="HOGENOM" id="CLU_018272_3_0_11"/>
<dbReference type="UniPathway" id="UPA00060">
    <property type="reaction ID" value="UER00141"/>
</dbReference>
<dbReference type="Proteomes" id="UP000000580">
    <property type="component" value="Chromosome"/>
</dbReference>
<dbReference type="GO" id="GO:0005737">
    <property type="term" value="C:cytoplasm"/>
    <property type="evidence" value="ECO:0007669"/>
    <property type="project" value="TreeGrafter"/>
</dbReference>
<dbReference type="GO" id="GO:0000287">
    <property type="term" value="F:magnesium ion binding"/>
    <property type="evidence" value="ECO:0007669"/>
    <property type="project" value="UniProtKB-UniRule"/>
</dbReference>
<dbReference type="GO" id="GO:0004789">
    <property type="term" value="F:thiamine-phosphate diphosphorylase activity"/>
    <property type="evidence" value="ECO:0007669"/>
    <property type="project" value="UniProtKB-UniRule"/>
</dbReference>
<dbReference type="GO" id="GO:0009228">
    <property type="term" value="P:thiamine biosynthetic process"/>
    <property type="evidence" value="ECO:0007669"/>
    <property type="project" value="UniProtKB-KW"/>
</dbReference>
<dbReference type="GO" id="GO:0009229">
    <property type="term" value="P:thiamine diphosphate biosynthetic process"/>
    <property type="evidence" value="ECO:0007669"/>
    <property type="project" value="UniProtKB-UniRule"/>
</dbReference>
<dbReference type="CDD" id="cd00564">
    <property type="entry name" value="TMP_TenI"/>
    <property type="match status" value="1"/>
</dbReference>
<dbReference type="FunFam" id="3.20.20.70:FF:000178">
    <property type="entry name" value="Thiamine-phosphate synthase"/>
    <property type="match status" value="1"/>
</dbReference>
<dbReference type="Gene3D" id="3.20.20.70">
    <property type="entry name" value="Aldolase class I"/>
    <property type="match status" value="1"/>
</dbReference>
<dbReference type="HAMAP" id="MF_00097">
    <property type="entry name" value="TMP_synthase"/>
    <property type="match status" value="1"/>
</dbReference>
<dbReference type="InterPro" id="IPR013785">
    <property type="entry name" value="Aldolase_TIM"/>
</dbReference>
<dbReference type="InterPro" id="IPR036206">
    <property type="entry name" value="ThiamineP_synth_sf"/>
</dbReference>
<dbReference type="InterPro" id="IPR022998">
    <property type="entry name" value="ThiamineP_synth_TenI"/>
</dbReference>
<dbReference type="InterPro" id="IPR034291">
    <property type="entry name" value="TMP_synthase"/>
</dbReference>
<dbReference type="NCBIfam" id="TIGR00693">
    <property type="entry name" value="thiE"/>
    <property type="match status" value="1"/>
</dbReference>
<dbReference type="PANTHER" id="PTHR20857">
    <property type="entry name" value="THIAMINE-PHOSPHATE PYROPHOSPHORYLASE"/>
    <property type="match status" value="1"/>
</dbReference>
<dbReference type="PANTHER" id="PTHR20857:SF15">
    <property type="entry name" value="THIAMINE-PHOSPHATE SYNTHASE"/>
    <property type="match status" value="1"/>
</dbReference>
<dbReference type="Pfam" id="PF02581">
    <property type="entry name" value="TMP-TENI"/>
    <property type="match status" value="1"/>
</dbReference>
<dbReference type="SUPFAM" id="SSF51391">
    <property type="entry name" value="Thiamin phosphate synthase"/>
    <property type="match status" value="1"/>
</dbReference>
<name>THIE_MYCPA</name>
<evidence type="ECO:0000255" key="1">
    <source>
        <dbReference type="HAMAP-Rule" id="MF_00097"/>
    </source>
</evidence>
<protein>
    <recommendedName>
        <fullName evidence="1">Thiamine-phosphate synthase</fullName>
        <shortName evidence="1">TP synthase</shortName>
        <shortName evidence="1">TPS</shortName>
        <ecNumber evidence="1">2.5.1.3</ecNumber>
    </recommendedName>
    <alternativeName>
        <fullName evidence="1">Thiamine-phosphate pyrophosphorylase</fullName>
        <shortName evidence="1">TMP pyrophosphorylase</shortName>
        <shortName evidence="1">TMP-PPase</shortName>
    </alternativeName>
</protein>
<comment type="function">
    <text evidence="1">Condenses 4-methyl-5-(beta-hydroxyethyl)thiazole monophosphate (THZ-P) and 2-methyl-4-amino-5-hydroxymethyl pyrimidine pyrophosphate (HMP-PP) to form thiamine monophosphate (TMP).</text>
</comment>
<comment type="catalytic activity">
    <reaction evidence="1">
        <text>2-[(2R,5Z)-2-carboxy-4-methylthiazol-5(2H)-ylidene]ethyl phosphate + 4-amino-2-methyl-5-(diphosphooxymethyl)pyrimidine + 2 H(+) = thiamine phosphate + CO2 + diphosphate</text>
        <dbReference type="Rhea" id="RHEA:47844"/>
        <dbReference type="ChEBI" id="CHEBI:15378"/>
        <dbReference type="ChEBI" id="CHEBI:16526"/>
        <dbReference type="ChEBI" id="CHEBI:33019"/>
        <dbReference type="ChEBI" id="CHEBI:37575"/>
        <dbReference type="ChEBI" id="CHEBI:57841"/>
        <dbReference type="ChEBI" id="CHEBI:62899"/>
        <dbReference type="EC" id="2.5.1.3"/>
    </reaction>
</comment>
<comment type="catalytic activity">
    <reaction evidence="1">
        <text>2-(2-carboxy-4-methylthiazol-5-yl)ethyl phosphate + 4-amino-2-methyl-5-(diphosphooxymethyl)pyrimidine + 2 H(+) = thiamine phosphate + CO2 + diphosphate</text>
        <dbReference type="Rhea" id="RHEA:47848"/>
        <dbReference type="ChEBI" id="CHEBI:15378"/>
        <dbReference type="ChEBI" id="CHEBI:16526"/>
        <dbReference type="ChEBI" id="CHEBI:33019"/>
        <dbReference type="ChEBI" id="CHEBI:37575"/>
        <dbReference type="ChEBI" id="CHEBI:57841"/>
        <dbReference type="ChEBI" id="CHEBI:62890"/>
        <dbReference type="EC" id="2.5.1.3"/>
    </reaction>
</comment>
<comment type="catalytic activity">
    <reaction evidence="1">
        <text>4-methyl-5-(2-phosphooxyethyl)-thiazole + 4-amino-2-methyl-5-(diphosphooxymethyl)pyrimidine + H(+) = thiamine phosphate + diphosphate</text>
        <dbReference type="Rhea" id="RHEA:22328"/>
        <dbReference type="ChEBI" id="CHEBI:15378"/>
        <dbReference type="ChEBI" id="CHEBI:33019"/>
        <dbReference type="ChEBI" id="CHEBI:37575"/>
        <dbReference type="ChEBI" id="CHEBI:57841"/>
        <dbReference type="ChEBI" id="CHEBI:58296"/>
        <dbReference type="EC" id="2.5.1.3"/>
    </reaction>
</comment>
<comment type="cofactor">
    <cofactor evidence="1">
        <name>Mg(2+)</name>
        <dbReference type="ChEBI" id="CHEBI:18420"/>
    </cofactor>
    <text evidence="1">Binds 1 Mg(2+) ion per subunit.</text>
</comment>
<comment type="pathway">
    <text evidence="1">Cofactor biosynthesis; thiamine diphosphate biosynthesis; thiamine phosphate from 4-amino-2-methyl-5-diphosphomethylpyrimidine and 4-methyl-5-(2-phosphoethyl)-thiazole: step 1/1.</text>
</comment>
<comment type="similarity">
    <text evidence="1">Belongs to the thiamine-phosphate synthase family.</text>
</comment>